<evidence type="ECO:0000255" key="1">
    <source>
        <dbReference type="HAMAP-Rule" id="MF_00434"/>
    </source>
</evidence>
<organism>
    <name type="scientific">Burkholderia cenocepacia (strain HI2424)</name>
    <dbReference type="NCBI Taxonomy" id="331272"/>
    <lineage>
        <taxon>Bacteria</taxon>
        <taxon>Pseudomonadati</taxon>
        <taxon>Pseudomonadota</taxon>
        <taxon>Betaproteobacteria</taxon>
        <taxon>Burkholderiales</taxon>
        <taxon>Burkholderiaceae</taxon>
        <taxon>Burkholderia</taxon>
        <taxon>Burkholderia cepacia complex</taxon>
    </lineage>
</organism>
<protein>
    <recommendedName>
        <fullName evidence="1">Putative pterin-4-alpha-carbinolamine dehydratase</fullName>
        <shortName evidence="1">PHS</shortName>
        <ecNumber evidence="1">4.2.1.96</ecNumber>
    </recommendedName>
    <alternativeName>
        <fullName evidence="1">4-alpha-hydroxy-tetrahydropterin dehydratase</fullName>
    </alternativeName>
    <alternativeName>
        <fullName evidence="1">Pterin carbinolamine dehydratase</fullName>
        <shortName evidence="1">PCD</shortName>
    </alternativeName>
</protein>
<reference key="1">
    <citation type="submission" date="2006-08" db="EMBL/GenBank/DDBJ databases">
        <title>Complete sequence of chromosome 1 of Burkholderia cenocepacia HI2424.</title>
        <authorList>
            <person name="Copeland A."/>
            <person name="Lucas S."/>
            <person name="Lapidus A."/>
            <person name="Barry K."/>
            <person name="Detter J.C."/>
            <person name="Glavina del Rio T."/>
            <person name="Hammon N."/>
            <person name="Israni S."/>
            <person name="Pitluck S."/>
            <person name="Chain P."/>
            <person name="Malfatti S."/>
            <person name="Shin M."/>
            <person name="Vergez L."/>
            <person name="Schmutz J."/>
            <person name="Larimer F."/>
            <person name="Land M."/>
            <person name="Hauser L."/>
            <person name="Kyrpides N."/>
            <person name="Kim E."/>
            <person name="LiPuma J.J."/>
            <person name="Gonzalez C.F."/>
            <person name="Konstantinidis K."/>
            <person name="Tiedje J.M."/>
            <person name="Richardson P."/>
        </authorList>
    </citation>
    <scope>NUCLEOTIDE SEQUENCE [LARGE SCALE GENOMIC DNA]</scope>
    <source>
        <strain>HI2424</strain>
    </source>
</reference>
<accession>A0K2V4</accession>
<proteinExistence type="inferred from homology"/>
<name>PHS_BURCH</name>
<keyword id="KW-0456">Lyase</keyword>
<comment type="catalytic activity">
    <reaction evidence="1">
        <text>(4aS,6R)-4a-hydroxy-L-erythro-5,6,7,8-tetrahydrobiopterin = (6R)-L-erythro-6,7-dihydrobiopterin + H2O</text>
        <dbReference type="Rhea" id="RHEA:11920"/>
        <dbReference type="ChEBI" id="CHEBI:15377"/>
        <dbReference type="ChEBI" id="CHEBI:15642"/>
        <dbReference type="ChEBI" id="CHEBI:43120"/>
        <dbReference type="EC" id="4.2.1.96"/>
    </reaction>
</comment>
<comment type="similarity">
    <text evidence="1">Belongs to the pterin-4-alpha-carbinolamine dehydratase family.</text>
</comment>
<sequence>MIHKLTSEERKTRLEGLPHWTAVPGRDAIQRRLRFADFNEAFGFMTRVAIKAQEMNHHPEWFNVYNRVDITLSTHDADGLTERDIELARFIDGAAAHAQPGA</sequence>
<dbReference type="EC" id="4.2.1.96" evidence="1"/>
<dbReference type="EMBL" id="CP000458">
    <property type="protein sequence ID" value="ABK06831.1"/>
    <property type="molecule type" value="Genomic_DNA"/>
</dbReference>
<dbReference type="RefSeq" id="WP_011694015.1">
    <property type="nucleotide sequence ID" value="NC_008542.1"/>
</dbReference>
<dbReference type="SMR" id="A0K2V4"/>
<dbReference type="KEGG" id="bch:Bcen2424_0077"/>
<dbReference type="HOGENOM" id="CLU_081974_3_2_4"/>
<dbReference type="GO" id="GO:0008124">
    <property type="term" value="F:4-alpha-hydroxytetrahydrobiopterin dehydratase activity"/>
    <property type="evidence" value="ECO:0007669"/>
    <property type="project" value="UniProtKB-UniRule"/>
</dbReference>
<dbReference type="GO" id="GO:0006729">
    <property type="term" value="P:tetrahydrobiopterin biosynthetic process"/>
    <property type="evidence" value="ECO:0007669"/>
    <property type="project" value="InterPro"/>
</dbReference>
<dbReference type="CDD" id="cd00914">
    <property type="entry name" value="PCD_DCoH_subfamily_b"/>
    <property type="match status" value="1"/>
</dbReference>
<dbReference type="Gene3D" id="3.30.1360.20">
    <property type="entry name" value="Transcriptional coactivator/pterin dehydratase"/>
    <property type="match status" value="1"/>
</dbReference>
<dbReference type="HAMAP" id="MF_00434">
    <property type="entry name" value="Pterin_4_alpha"/>
    <property type="match status" value="1"/>
</dbReference>
<dbReference type="InterPro" id="IPR036428">
    <property type="entry name" value="PCD_sf"/>
</dbReference>
<dbReference type="InterPro" id="IPR001533">
    <property type="entry name" value="Pterin_deHydtase"/>
</dbReference>
<dbReference type="NCBIfam" id="NF002017">
    <property type="entry name" value="PRK00823.1-2"/>
    <property type="match status" value="1"/>
</dbReference>
<dbReference type="NCBIfam" id="NF002018">
    <property type="entry name" value="PRK00823.1-3"/>
    <property type="match status" value="1"/>
</dbReference>
<dbReference type="NCBIfam" id="NF002020">
    <property type="entry name" value="PRK00823.1-5"/>
    <property type="match status" value="1"/>
</dbReference>
<dbReference type="PANTHER" id="PTHR12599">
    <property type="entry name" value="PTERIN-4-ALPHA-CARBINOLAMINE DEHYDRATASE"/>
    <property type="match status" value="1"/>
</dbReference>
<dbReference type="PANTHER" id="PTHR12599:SF0">
    <property type="entry name" value="PTERIN-4-ALPHA-CARBINOLAMINE DEHYDRATASE"/>
    <property type="match status" value="1"/>
</dbReference>
<dbReference type="Pfam" id="PF01329">
    <property type="entry name" value="Pterin_4a"/>
    <property type="match status" value="1"/>
</dbReference>
<dbReference type="SUPFAM" id="SSF55248">
    <property type="entry name" value="PCD-like"/>
    <property type="match status" value="1"/>
</dbReference>
<feature type="chain" id="PRO_1000050410" description="Putative pterin-4-alpha-carbinolamine dehydratase">
    <location>
        <begin position="1"/>
        <end position="102"/>
    </location>
</feature>
<gene>
    <name type="ordered locus">Bcen2424_0077</name>
</gene>